<accession>B1IE30</accession>
<dbReference type="EMBL" id="CP000939">
    <property type="protein sequence ID" value="ACA44754.1"/>
    <property type="molecule type" value="Genomic_DNA"/>
</dbReference>
<dbReference type="RefSeq" id="WP_003405056.1">
    <property type="nucleotide sequence ID" value="NC_010516.1"/>
</dbReference>
<dbReference type="SMR" id="B1IE30"/>
<dbReference type="KEGG" id="cbb:CLD_0633"/>
<dbReference type="HOGENOM" id="CLU_079215_4_0_9"/>
<dbReference type="Proteomes" id="UP000008541">
    <property type="component" value="Chromosome"/>
</dbReference>
<dbReference type="GO" id="GO:0005886">
    <property type="term" value="C:plasma membrane"/>
    <property type="evidence" value="ECO:0007669"/>
    <property type="project" value="UniProtKB-SubCell"/>
</dbReference>
<dbReference type="GO" id="GO:0045259">
    <property type="term" value="C:proton-transporting ATP synthase complex"/>
    <property type="evidence" value="ECO:0007669"/>
    <property type="project" value="UniProtKB-KW"/>
</dbReference>
<dbReference type="GO" id="GO:0046933">
    <property type="term" value="F:proton-transporting ATP synthase activity, rotational mechanism"/>
    <property type="evidence" value="ECO:0007669"/>
    <property type="project" value="UniProtKB-UniRule"/>
</dbReference>
<dbReference type="GO" id="GO:0046961">
    <property type="term" value="F:proton-transporting ATPase activity, rotational mechanism"/>
    <property type="evidence" value="ECO:0007669"/>
    <property type="project" value="TreeGrafter"/>
</dbReference>
<dbReference type="CDD" id="cd06503">
    <property type="entry name" value="ATP-synt_Fo_b"/>
    <property type="match status" value="1"/>
</dbReference>
<dbReference type="Gene3D" id="1.20.5.620">
    <property type="entry name" value="F1F0 ATP synthase subunit B, membrane domain"/>
    <property type="match status" value="1"/>
</dbReference>
<dbReference type="HAMAP" id="MF_01398">
    <property type="entry name" value="ATP_synth_b_bprime"/>
    <property type="match status" value="1"/>
</dbReference>
<dbReference type="InterPro" id="IPR028987">
    <property type="entry name" value="ATP_synth_B-like_membr_sf"/>
</dbReference>
<dbReference type="InterPro" id="IPR002146">
    <property type="entry name" value="ATP_synth_b/b'su_bac/chlpt"/>
</dbReference>
<dbReference type="InterPro" id="IPR005864">
    <property type="entry name" value="ATP_synth_F0_bsu_bac"/>
</dbReference>
<dbReference type="InterPro" id="IPR050059">
    <property type="entry name" value="ATP_synthase_B_chain"/>
</dbReference>
<dbReference type="NCBIfam" id="TIGR01144">
    <property type="entry name" value="ATP_synt_b"/>
    <property type="match status" value="1"/>
</dbReference>
<dbReference type="NCBIfam" id="NF009992">
    <property type="entry name" value="PRK13461.1"/>
    <property type="match status" value="1"/>
</dbReference>
<dbReference type="PANTHER" id="PTHR33445:SF1">
    <property type="entry name" value="ATP SYNTHASE SUBUNIT B"/>
    <property type="match status" value="1"/>
</dbReference>
<dbReference type="PANTHER" id="PTHR33445">
    <property type="entry name" value="ATP SYNTHASE SUBUNIT B', CHLOROPLASTIC"/>
    <property type="match status" value="1"/>
</dbReference>
<dbReference type="Pfam" id="PF00430">
    <property type="entry name" value="ATP-synt_B"/>
    <property type="match status" value="1"/>
</dbReference>
<dbReference type="SUPFAM" id="SSF81573">
    <property type="entry name" value="F1F0 ATP synthase subunit B, membrane domain"/>
    <property type="match status" value="1"/>
</dbReference>
<sequence>MNISIPQIIAAILNFIILLLIVKHFWFDKITAVVDSRQSEIINKIEDTDKNQKLALELKEKNELELSNAKNQGKTIVEEYKSKAENVYEDIVKEAHEEADRIIKKSRLEAERQKKNAEEEIRAEAVELAVLVSSKTLEKTIDDLEHRRLIKDFISKVGI</sequence>
<protein>
    <recommendedName>
        <fullName evidence="1">ATP synthase subunit b</fullName>
    </recommendedName>
    <alternativeName>
        <fullName evidence="1">ATP synthase F(0) sector subunit b</fullName>
    </alternativeName>
    <alternativeName>
        <fullName evidence="1">ATPase subunit I</fullName>
    </alternativeName>
    <alternativeName>
        <fullName evidence="1">F-type ATPase subunit b</fullName>
        <shortName evidence="1">F-ATPase subunit b</shortName>
    </alternativeName>
</protein>
<name>ATPF_CLOBK</name>
<comment type="function">
    <text evidence="1">F(1)F(0) ATP synthase produces ATP from ADP in the presence of a proton or sodium gradient. F-type ATPases consist of two structural domains, F(1) containing the extramembraneous catalytic core and F(0) containing the membrane proton channel, linked together by a central stalk and a peripheral stalk. During catalysis, ATP synthesis in the catalytic domain of F(1) is coupled via a rotary mechanism of the central stalk subunits to proton translocation.</text>
</comment>
<comment type="function">
    <text evidence="1">Component of the F(0) channel, it forms part of the peripheral stalk, linking F(1) to F(0).</text>
</comment>
<comment type="subunit">
    <text evidence="1">F-type ATPases have 2 components, F(1) - the catalytic core - and F(0) - the membrane proton channel. F(1) has five subunits: alpha(3), beta(3), gamma(1), delta(1), epsilon(1). F(0) has three main subunits: a(1), b(2) and c(10-14). The alpha and beta chains form an alternating ring which encloses part of the gamma chain. F(1) is attached to F(0) by a central stalk formed by the gamma and epsilon chains, while a peripheral stalk is formed by the delta and b chains.</text>
</comment>
<comment type="subcellular location">
    <subcellularLocation>
        <location evidence="1">Cell membrane</location>
        <topology evidence="1">Single-pass membrane protein</topology>
    </subcellularLocation>
</comment>
<comment type="similarity">
    <text evidence="1">Belongs to the ATPase B chain family.</text>
</comment>
<proteinExistence type="inferred from homology"/>
<gene>
    <name evidence="1" type="primary">atpF</name>
    <name type="ordered locus">CLD_0633</name>
</gene>
<evidence type="ECO:0000255" key="1">
    <source>
        <dbReference type="HAMAP-Rule" id="MF_01398"/>
    </source>
</evidence>
<organism>
    <name type="scientific">Clostridium botulinum (strain Okra / Type B1)</name>
    <dbReference type="NCBI Taxonomy" id="498213"/>
    <lineage>
        <taxon>Bacteria</taxon>
        <taxon>Bacillati</taxon>
        <taxon>Bacillota</taxon>
        <taxon>Clostridia</taxon>
        <taxon>Eubacteriales</taxon>
        <taxon>Clostridiaceae</taxon>
        <taxon>Clostridium</taxon>
    </lineage>
</organism>
<keyword id="KW-0066">ATP synthesis</keyword>
<keyword id="KW-1003">Cell membrane</keyword>
<keyword id="KW-0138">CF(0)</keyword>
<keyword id="KW-0375">Hydrogen ion transport</keyword>
<keyword id="KW-0406">Ion transport</keyword>
<keyword id="KW-0472">Membrane</keyword>
<keyword id="KW-0812">Transmembrane</keyword>
<keyword id="KW-1133">Transmembrane helix</keyword>
<keyword id="KW-0813">Transport</keyword>
<reference key="1">
    <citation type="journal article" date="2007" name="PLoS ONE">
        <title>Analysis of the neurotoxin complex genes in Clostridium botulinum A1-A4 and B1 strains: BoNT/A3, /Ba4 and /B1 clusters are located within plasmids.</title>
        <authorList>
            <person name="Smith T.J."/>
            <person name="Hill K.K."/>
            <person name="Foley B.T."/>
            <person name="Detter J.C."/>
            <person name="Munk A.C."/>
            <person name="Bruce D.C."/>
            <person name="Doggett N.A."/>
            <person name="Smith L.A."/>
            <person name="Marks J.D."/>
            <person name="Xie G."/>
            <person name="Brettin T.S."/>
        </authorList>
    </citation>
    <scope>NUCLEOTIDE SEQUENCE [LARGE SCALE GENOMIC DNA]</scope>
    <source>
        <strain>Okra / Type B1</strain>
    </source>
</reference>
<feature type="chain" id="PRO_0000368426" description="ATP synthase subunit b">
    <location>
        <begin position="1"/>
        <end position="159"/>
    </location>
</feature>
<feature type="transmembrane region" description="Helical" evidence="1">
    <location>
        <begin position="2"/>
        <end position="22"/>
    </location>
</feature>